<accession>Q6NLP7</accession>
<accession>Q9M1P6</accession>
<gene>
    <name type="ordered locus">At3g62280</name>
    <name type="ORF">T17J13.240</name>
</gene>
<protein>
    <recommendedName>
        <fullName>GDSL esterase/lipase At3g62280</fullName>
        <ecNumber>3.1.1.-</ecNumber>
    </recommendedName>
    <alternativeName>
        <fullName>Extracellular lipase At3g62280</fullName>
    </alternativeName>
</protein>
<organism>
    <name type="scientific">Arabidopsis thaliana</name>
    <name type="common">Mouse-ear cress</name>
    <dbReference type="NCBI Taxonomy" id="3702"/>
    <lineage>
        <taxon>Eukaryota</taxon>
        <taxon>Viridiplantae</taxon>
        <taxon>Streptophyta</taxon>
        <taxon>Embryophyta</taxon>
        <taxon>Tracheophyta</taxon>
        <taxon>Spermatophyta</taxon>
        <taxon>Magnoliopsida</taxon>
        <taxon>eudicotyledons</taxon>
        <taxon>Gunneridae</taxon>
        <taxon>Pentapetalae</taxon>
        <taxon>rosids</taxon>
        <taxon>malvids</taxon>
        <taxon>Brassicales</taxon>
        <taxon>Brassicaceae</taxon>
        <taxon>Camelineae</taxon>
        <taxon>Arabidopsis</taxon>
    </lineage>
</organism>
<comment type="subcellular location">
    <subcellularLocation>
        <location evidence="3">Secreted</location>
    </subcellularLocation>
</comment>
<comment type="similarity">
    <text evidence="3">Belongs to the 'GDSL' lipolytic enzyme family.</text>
</comment>
<comment type="sequence caution" evidence="3">
    <conflict type="erroneous gene model prediction">
        <sequence resource="EMBL-CDS" id="CAB71888"/>
    </conflict>
</comment>
<evidence type="ECO:0000250" key="1"/>
<evidence type="ECO:0000255" key="2"/>
<evidence type="ECO:0000305" key="3"/>
<name>GDL60_ARATH</name>
<keyword id="KW-0325">Glycoprotein</keyword>
<keyword id="KW-0378">Hydrolase</keyword>
<keyword id="KW-0442">Lipid degradation</keyword>
<keyword id="KW-0443">Lipid metabolism</keyword>
<keyword id="KW-1185">Reference proteome</keyword>
<keyword id="KW-0964">Secreted</keyword>
<keyword id="KW-0732">Signal</keyword>
<proteinExistence type="evidence at transcript level"/>
<dbReference type="EC" id="3.1.1.-"/>
<dbReference type="EMBL" id="AL138651">
    <property type="protein sequence ID" value="CAB71888.1"/>
    <property type="status" value="ALT_SEQ"/>
    <property type="molecule type" value="Genomic_DNA"/>
</dbReference>
<dbReference type="EMBL" id="CP002686">
    <property type="protein sequence ID" value="AEE80331.1"/>
    <property type="molecule type" value="Genomic_DNA"/>
</dbReference>
<dbReference type="EMBL" id="BT012283">
    <property type="protein sequence ID" value="AAS76770.1"/>
    <property type="molecule type" value="mRNA"/>
</dbReference>
<dbReference type="EMBL" id="AK221545">
    <property type="protein sequence ID" value="BAD94911.1"/>
    <property type="molecule type" value="mRNA"/>
</dbReference>
<dbReference type="PIR" id="T48020">
    <property type="entry name" value="T48020"/>
</dbReference>
<dbReference type="RefSeq" id="NP_191787.2">
    <property type="nucleotide sequence ID" value="NM_116093.5"/>
</dbReference>
<dbReference type="SMR" id="Q6NLP7"/>
<dbReference type="FunCoup" id="Q6NLP7">
    <property type="interactions" value="111"/>
</dbReference>
<dbReference type="GlyGen" id="Q6NLP7">
    <property type="glycosylation" value="3 sites"/>
</dbReference>
<dbReference type="iPTMnet" id="Q6NLP7"/>
<dbReference type="PaxDb" id="3702-AT3G62280.1"/>
<dbReference type="ProteomicsDB" id="224763"/>
<dbReference type="EnsemblPlants" id="AT3G62280.1">
    <property type="protein sequence ID" value="AT3G62280.1"/>
    <property type="gene ID" value="AT3G62280"/>
</dbReference>
<dbReference type="GeneID" id="825401"/>
<dbReference type="Gramene" id="AT3G62280.1">
    <property type="protein sequence ID" value="AT3G62280.1"/>
    <property type="gene ID" value="AT3G62280"/>
</dbReference>
<dbReference type="KEGG" id="ath:AT3G62280"/>
<dbReference type="Araport" id="AT3G62280"/>
<dbReference type="TAIR" id="AT3G62280"/>
<dbReference type="eggNOG" id="ENOG502QW55">
    <property type="taxonomic scope" value="Eukaryota"/>
</dbReference>
<dbReference type="HOGENOM" id="CLU_015101_2_0_1"/>
<dbReference type="InParanoid" id="Q6NLP7"/>
<dbReference type="OMA" id="RNICKEM"/>
<dbReference type="PhylomeDB" id="Q6NLP7"/>
<dbReference type="BioCyc" id="ARA:AT3G62280-MONOMER"/>
<dbReference type="PRO" id="PR:Q6NLP7"/>
<dbReference type="Proteomes" id="UP000006548">
    <property type="component" value="Chromosome 3"/>
</dbReference>
<dbReference type="ExpressionAtlas" id="Q6NLP7">
    <property type="expression patterns" value="baseline and differential"/>
</dbReference>
<dbReference type="GO" id="GO:0005576">
    <property type="term" value="C:extracellular region"/>
    <property type="evidence" value="ECO:0007669"/>
    <property type="project" value="UniProtKB-SubCell"/>
</dbReference>
<dbReference type="GO" id="GO:0016788">
    <property type="term" value="F:hydrolase activity, acting on ester bonds"/>
    <property type="evidence" value="ECO:0007669"/>
    <property type="project" value="InterPro"/>
</dbReference>
<dbReference type="GO" id="GO:0016042">
    <property type="term" value="P:lipid catabolic process"/>
    <property type="evidence" value="ECO:0007669"/>
    <property type="project" value="UniProtKB-KW"/>
</dbReference>
<dbReference type="CDD" id="cd01837">
    <property type="entry name" value="SGNH_plant_lipase_like"/>
    <property type="match status" value="1"/>
</dbReference>
<dbReference type="Gene3D" id="3.40.50.1110">
    <property type="entry name" value="SGNH hydrolase"/>
    <property type="match status" value="1"/>
</dbReference>
<dbReference type="InterPro" id="IPR001087">
    <property type="entry name" value="GDSL"/>
</dbReference>
<dbReference type="InterPro" id="IPR036514">
    <property type="entry name" value="SGNH_hydro_sf"/>
</dbReference>
<dbReference type="InterPro" id="IPR035669">
    <property type="entry name" value="SGNH_plant_lipase-like"/>
</dbReference>
<dbReference type="PANTHER" id="PTHR22835:SF507">
    <property type="entry name" value="GDSL-LIKE LIPASE_ACYLHYDROLASE SUPERFAMILY PROTEIN"/>
    <property type="match status" value="1"/>
</dbReference>
<dbReference type="PANTHER" id="PTHR22835">
    <property type="entry name" value="ZINC FINGER FYVE DOMAIN CONTAINING PROTEIN"/>
    <property type="match status" value="1"/>
</dbReference>
<dbReference type="Pfam" id="PF00657">
    <property type="entry name" value="Lipase_GDSL"/>
    <property type="match status" value="1"/>
</dbReference>
<dbReference type="SUPFAM" id="SSF52266">
    <property type="entry name" value="SGNH hydrolase"/>
    <property type="match status" value="1"/>
</dbReference>
<feature type="signal peptide" evidence="2">
    <location>
        <begin position="1"/>
        <end position="25"/>
    </location>
</feature>
<feature type="chain" id="PRO_0000367401" description="GDSL esterase/lipase At3g62280">
    <location>
        <begin position="26"/>
        <end position="365"/>
    </location>
</feature>
<feature type="active site" description="Nucleophile" evidence="1">
    <location>
        <position position="43"/>
    </location>
</feature>
<feature type="active site" evidence="1">
    <location>
        <position position="333"/>
    </location>
</feature>
<feature type="active site" evidence="1">
    <location>
        <position position="336"/>
    </location>
</feature>
<feature type="glycosylation site" description="N-linked (GlcNAc...) asparagine" evidence="2">
    <location>
        <position position="137"/>
    </location>
</feature>
<feature type="glycosylation site" description="N-linked (GlcNAc...) asparagine" evidence="2">
    <location>
        <position position="178"/>
    </location>
</feature>
<feature type="glycosylation site" description="N-linked (GlcNAc...) asparagine" evidence="2">
    <location>
        <position position="231"/>
    </location>
</feature>
<reference key="1">
    <citation type="journal article" date="2000" name="Nature">
        <title>Sequence and analysis of chromosome 3 of the plant Arabidopsis thaliana.</title>
        <authorList>
            <person name="Salanoubat M."/>
            <person name="Lemcke K."/>
            <person name="Rieger M."/>
            <person name="Ansorge W."/>
            <person name="Unseld M."/>
            <person name="Fartmann B."/>
            <person name="Valle G."/>
            <person name="Bloecker H."/>
            <person name="Perez-Alonso M."/>
            <person name="Obermaier B."/>
            <person name="Delseny M."/>
            <person name="Boutry M."/>
            <person name="Grivell L.A."/>
            <person name="Mache R."/>
            <person name="Puigdomenech P."/>
            <person name="De Simone V."/>
            <person name="Choisne N."/>
            <person name="Artiguenave F."/>
            <person name="Robert C."/>
            <person name="Brottier P."/>
            <person name="Wincker P."/>
            <person name="Cattolico L."/>
            <person name="Weissenbach J."/>
            <person name="Saurin W."/>
            <person name="Quetier F."/>
            <person name="Schaefer M."/>
            <person name="Mueller-Auer S."/>
            <person name="Gabel C."/>
            <person name="Fuchs M."/>
            <person name="Benes V."/>
            <person name="Wurmbach E."/>
            <person name="Drzonek H."/>
            <person name="Erfle H."/>
            <person name="Jordan N."/>
            <person name="Bangert S."/>
            <person name="Wiedelmann R."/>
            <person name="Kranz H."/>
            <person name="Voss H."/>
            <person name="Holland R."/>
            <person name="Brandt P."/>
            <person name="Nyakatura G."/>
            <person name="Vezzi A."/>
            <person name="D'Angelo M."/>
            <person name="Pallavicini A."/>
            <person name="Toppo S."/>
            <person name="Simionati B."/>
            <person name="Conrad A."/>
            <person name="Hornischer K."/>
            <person name="Kauer G."/>
            <person name="Loehnert T.-H."/>
            <person name="Nordsiek G."/>
            <person name="Reichelt J."/>
            <person name="Scharfe M."/>
            <person name="Schoen O."/>
            <person name="Bargues M."/>
            <person name="Terol J."/>
            <person name="Climent J."/>
            <person name="Navarro P."/>
            <person name="Collado C."/>
            <person name="Perez-Perez A."/>
            <person name="Ottenwaelder B."/>
            <person name="Duchemin D."/>
            <person name="Cooke R."/>
            <person name="Laudie M."/>
            <person name="Berger-Llauro C."/>
            <person name="Purnelle B."/>
            <person name="Masuy D."/>
            <person name="de Haan M."/>
            <person name="Maarse A.C."/>
            <person name="Alcaraz J.-P."/>
            <person name="Cottet A."/>
            <person name="Casacuberta E."/>
            <person name="Monfort A."/>
            <person name="Argiriou A."/>
            <person name="Flores M."/>
            <person name="Liguori R."/>
            <person name="Vitale D."/>
            <person name="Mannhaupt G."/>
            <person name="Haase D."/>
            <person name="Schoof H."/>
            <person name="Rudd S."/>
            <person name="Zaccaria P."/>
            <person name="Mewes H.-W."/>
            <person name="Mayer K.F.X."/>
            <person name="Kaul S."/>
            <person name="Town C.D."/>
            <person name="Koo H.L."/>
            <person name="Tallon L.J."/>
            <person name="Jenkins J."/>
            <person name="Rooney T."/>
            <person name="Rizzo M."/>
            <person name="Walts A."/>
            <person name="Utterback T."/>
            <person name="Fujii C.Y."/>
            <person name="Shea T.P."/>
            <person name="Creasy T.H."/>
            <person name="Haas B."/>
            <person name="Maiti R."/>
            <person name="Wu D."/>
            <person name="Peterson J."/>
            <person name="Van Aken S."/>
            <person name="Pai G."/>
            <person name="Militscher J."/>
            <person name="Sellers P."/>
            <person name="Gill J.E."/>
            <person name="Feldblyum T.V."/>
            <person name="Preuss D."/>
            <person name="Lin X."/>
            <person name="Nierman W.C."/>
            <person name="Salzberg S.L."/>
            <person name="White O."/>
            <person name="Venter J.C."/>
            <person name="Fraser C.M."/>
            <person name="Kaneko T."/>
            <person name="Nakamura Y."/>
            <person name="Sato S."/>
            <person name="Kato T."/>
            <person name="Asamizu E."/>
            <person name="Sasamoto S."/>
            <person name="Kimura T."/>
            <person name="Idesawa K."/>
            <person name="Kawashima K."/>
            <person name="Kishida Y."/>
            <person name="Kiyokawa C."/>
            <person name="Kohara M."/>
            <person name="Matsumoto M."/>
            <person name="Matsuno A."/>
            <person name="Muraki A."/>
            <person name="Nakayama S."/>
            <person name="Nakazaki N."/>
            <person name="Shinpo S."/>
            <person name="Takeuchi C."/>
            <person name="Wada T."/>
            <person name="Watanabe A."/>
            <person name="Yamada M."/>
            <person name="Yasuda M."/>
            <person name="Tabata S."/>
        </authorList>
    </citation>
    <scope>NUCLEOTIDE SEQUENCE [LARGE SCALE GENOMIC DNA]</scope>
    <source>
        <strain>cv. Columbia</strain>
    </source>
</reference>
<reference key="2">
    <citation type="journal article" date="2017" name="Plant J.">
        <title>Araport11: a complete reannotation of the Arabidopsis thaliana reference genome.</title>
        <authorList>
            <person name="Cheng C.Y."/>
            <person name="Krishnakumar V."/>
            <person name="Chan A.P."/>
            <person name="Thibaud-Nissen F."/>
            <person name="Schobel S."/>
            <person name="Town C.D."/>
        </authorList>
    </citation>
    <scope>GENOME REANNOTATION</scope>
    <source>
        <strain>cv. Columbia</strain>
    </source>
</reference>
<reference key="3">
    <citation type="submission" date="2004-03" db="EMBL/GenBank/DDBJ databases">
        <title>Arabidopsis ORF clones.</title>
        <authorList>
            <person name="Cheuk R.F."/>
            <person name="Chen H."/>
            <person name="Kim C.J."/>
            <person name="Shinn P."/>
            <person name="Carninci P."/>
            <person name="Hayashizaki Y."/>
            <person name="Ishida J."/>
            <person name="Kamiya A."/>
            <person name="Kawai J."/>
            <person name="Narusaka M."/>
            <person name="Sakurai T."/>
            <person name="Satou M."/>
            <person name="Seki M."/>
            <person name="Shinozaki K."/>
            <person name="Ecker J.R."/>
        </authorList>
    </citation>
    <scope>NUCLEOTIDE SEQUENCE [LARGE SCALE MRNA]</scope>
    <source>
        <strain>cv. Columbia</strain>
    </source>
</reference>
<reference key="4">
    <citation type="submission" date="2005-03" db="EMBL/GenBank/DDBJ databases">
        <title>Large-scale analysis of RIKEN Arabidopsis full-length (RAFL) cDNAs.</title>
        <authorList>
            <person name="Totoki Y."/>
            <person name="Seki M."/>
            <person name="Ishida J."/>
            <person name="Nakajima M."/>
            <person name="Enju A."/>
            <person name="Kamiya A."/>
            <person name="Narusaka M."/>
            <person name="Shin-i T."/>
            <person name="Nakagawa M."/>
            <person name="Sakamoto N."/>
            <person name="Oishi K."/>
            <person name="Kohara Y."/>
            <person name="Kobayashi M."/>
            <person name="Toyoda A."/>
            <person name="Sakaki Y."/>
            <person name="Sakurai T."/>
            <person name="Iida K."/>
            <person name="Akiyama K."/>
            <person name="Satou M."/>
            <person name="Toyoda T."/>
            <person name="Konagaya A."/>
            <person name="Carninci P."/>
            <person name="Kawai J."/>
            <person name="Hayashizaki Y."/>
            <person name="Shinozaki K."/>
        </authorList>
    </citation>
    <scope>NUCLEOTIDE SEQUENCE [LARGE SCALE MRNA]</scope>
    <source>
        <strain>cv. Columbia</strain>
    </source>
</reference>
<reference key="5">
    <citation type="journal article" date="2004" name="Prog. Lipid Res.">
        <title>GDSL family of serine esterases/lipases.</title>
        <authorList>
            <person name="Akoh C.C."/>
            <person name="Lee G.-C."/>
            <person name="Liaw Y.-C."/>
            <person name="Huang T.-H."/>
            <person name="Shaw J.-F."/>
        </authorList>
    </citation>
    <scope>REVIEW</scope>
</reference>
<reference key="6">
    <citation type="journal article" date="2008" name="Pak. J. Biol. Sci.">
        <title>Sequence analysis of GDSL lipase gene family in Arabidopsis thaliana.</title>
        <authorList>
            <person name="Ling H."/>
        </authorList>
    </citation>
    <scope>GENE FAMILY</scope>
</reference>
<sequence length="365" mass="40804">MDYTVSSLQCFFLVLCLSLLVCSNSETSYKSNKKPILINFGDSNSDTGGVLAGVGLPIGLPHGITFFHRGTGRLGDGRLIVDFYCEHLKMTYLSPYLDSLSPNFKRGVNFAVSGATALPIFSFPLAIQIRQFVHFKNRSQELISSGRRDLIDDNGFRNALYMIDIGQNDLLLALYDSNLTYAPVVEKIPSMLLEIKKAIQTVYLYGGRKFWVHNTGPLGCAPKELAIHLHNDSDLDPIGCFRVHNEVAKAFNKGLLSLCNELRSQFKDATLVYVDIYSIKYKLSADFKLYGFVDPLMACCGYGGRPNNYDRKATCGQPGSTICRDVTKAIVWDGVHYTEAANRFVVDAVLTNRYSYPKNSLDRFW</sequence>